<comment type="function">
    <text evidence="1">Inhibits phosphatase activity of protein phosphatase 1 (PP1) complexes.</text>
</comment>
<comment type="subunit">
    <text evidence="1">Interacts with PPP1CA.</text>
</comment>
<comment type="subcellular location">
    <subcellularLocation>
        <location evidence="4">Membrane</location>
        <topology evidence="4">Single-pass membrane protein</topology>
    </subcellularLocation>
</comment>
<gene>
    <name type="primary">Elfn2</name>
    <name type="synonym">Kiaa1904</name>
    <name type="synonym">Lrrc62</name>
    <name type="synonym">Ppp1r29</name>
</gene>
<dbReference type="EMBL" id="AK031970">
    <property type="protein sequence ID" value="BAC27630.1"/>
    <property type="molecule type" value="mRNA"/>
</dbReference>
<dbReference type="EMBL" id="BC079588">
    <property type="protein sequence ID" value="AAH79588.1"/>
    <property type="molecule type" value="mRNA"/>
</dbReference>
<dbReference type="EMBL" id="BC094219">
    <property type="protein sequence ID" value="AAH94219.1"/>
    <property type="molecule type" value="mRNA"/>
</dbReference>
<dbReference type="EMBL" id="AK173294">
    <property type="protein sequence ID" value="BAD32572.1"/>
    <property type="molecule type" value="mRNA"/>
</dbReference>
<dbReference type="CCDS" id="CCDS27621.1"/>
<dbReference type="RefSeq" id="NP_001345621.1">
    <property type="nucleotide sequence ID" value="NM_001358692.2"/>
</dbReference>
<dbReference type="RefSeq" id="NP_001403338.1">
    <property type="nucleotide sequence ID" value="NM_001416409.1"/>
</dbReference>
<dbReference type="RefSeq" id="NP_898964.2">
    <property type="nucleotide sequence ID" value="NM_183141.3"/>
</dbReference>
<dbReference type="RefSeq" id="XP_006520741.1">
    <property type="nucleotide sequence ID" value="XM_006520678.3"/>
</dbReference>
<dbReference type="RefSeq" id="XP_017172014.1">
    <property type="nucleotide sequence ID" value="XM_017316525.1"/>
</dbReference>
<dbReference type="RefSeq" id="XP_017172015.1">
    <property type="nucleotide sequence ID" value="XM_017316526.1"/>
</dbReference>
<dbReference type="RefSeq" id="XP_017172017.1">
    <property type="nucleotide sequence ID" value="XM_017316528.1"/>
</dbReference>
<dbReference type="RefSeq" id="XP_036015183.1">
    <property type="nucleotide sequence ID" value="XM_036159290.1"/>
</dbReference>
<dbReference type="RefSeq" id="XP_036015185.1">
    <property type="nucleotide sequence ID" value="XM_036159292.1"/>
</dbReference>
<dbReference type="SMR" id="Q68FM6"/>
<dbReference type="BioGRID" id="228897">
    <property type="interactions" value="7"/>
</dbReference>
<dbReference type="FunCoup" id="Q68FM6">
    <property type="interactions" value="280"/>
</dbReference>
<dbReference type="IntAct" id="Q68FM6">
    <property type="interactions" value="1"/>
</dbReference>
<dbReference type="MINT" id="Q68FM6"/>
<dbReference type="STRING" id="10090.ENSMUSP00000155111"/>
<dbReference type="GlyConnect" id="2641">
    <property type="glycosylation" value="5 N-Linked glycans (1 site)"/>
</dbReference>
<dbReference type="GlyCosmos" id="Q68FM6">
    <property type="glycosylation" value="7 sites, 5 glycans"/>
</dbReference>
<dbReference type="GlyGen" id="Q68FM6">
    <property type="glycosylation" value="9 sites, 10 N-linked glycans (6 sites), 1 O-linked glycan (1 site)"/>
</dbReference>
<dbReference type="iPTMnet" id="Q68FM6"/>
<dbReference type="PhosphoSitePlus" id="Q68FM6"/>
<dbReference type="SwissPalm" id="Q68FM6"/>
<dbReference type="PaxDb" id="10090-ENSMUSP00000085960"/>
<dbReference type="PeptideAtlas" id="Q68FM6"/>
<dbReference type="ProteomicsDB" id="291727"/>
<dbReference type="Antibodypedia" id="274">
    <property type="antibodies" value="61 antibodies from 15 providers"/>
</dbReference>
<dbReference type="DNASU" id="207393"/>
<dbReference type="Ensembl" id="ENSMUST00000088592.6">
    <property type="protein sequence ID" value="ENSMUSP00000085960.5"/>
    <property type="gene ID" value="ENSMUSG00000043460.8"/>
</dbReference>
<dbReference type="Ensembl" id="ENSMUST00000229441.2">
    <property type="protein sequence ID" value="ENSMUSP00000155111.2"/>
    <property type="gene ID" value="ENSMUSG00000043460.8"/>
</dbReference>
<dbReference type="GeneID" id="207393"/>
<dbReference type="KEGG" id="mmu:207393"/>
<dbReference type="UCSC" id="uc007wrf.1">
    <property type="organism name" value="mouse"/>
</dbReference>
<dbReference type="AGR" id="MGI:3608416"/>
<dbReference type="CTD" id="114794"/>
<dbReference type="MGI" id="MGI:3608416">
    <property type="gene designation" value="Elfn2"/>
</dbReference>
<dbReference type="VEuPathDB" id="HostDB:ENSMUSG00000043460"/>
<dbReference type="eggNOG" id="ENOG502QVFI">
    <property type="taxonomic scope" value="Eukaryota"/>
</dbReference>
<dbReference type="GeneTree" id="ENSGT00940000159737"/>
<dbReference type="HOGENOM" id="CLU_018770_0_0_1"/>
<dbReference type="InParanoid" id="Q68FM6"/>
<dbReference type="OMA" id="TIPHPYS"/>
<dbReference type="OrthoDB" id="676979at2759"/>
<dbReference type="PhylomeDB" id="Q68FM6"/>
<dbReference type="TreeFam" id="TF332887"/>
<dbReference type="BioGRID-ORCS" id="207393">
    <property type="hits" value="5 hits in 79 CRISPR screens"/>
</dbReference>
<dbReference type="CD-CODE" id="CE726F99">
    <property type="entry name" value="Postsynaptic density"/>
</dbReference>
<dbReference type="ChiTaRS" id="Elfn2">
    <property type="organism name" value="mouse"/>
</dbReference>
<dbReference type="PRO" id="PR:Q68FM6"/>
<dbReference type="Proteomes" id="UP000000589">
    <property type="component" value="Chromosome 15"/>
</dbReference>
<dbReference type="RNAct" id="Q68FM6">
    <property type="molecule type" value="protein"/>
</dbReference>
<dbReference type="Bgee" id="ENSMUSG00000043460">
    <property type="expression patterns" value="Expressed in subiculum and 101 other cell types or tissues"/>
</dbReference>
<dbReference type="GO" id="GO:0098839">
    <property type="term" value="C:postsynaptic density membrane"/>
    <property type="evidence" value="ECO:0000314"/>
    <property type="project" value="SynGO"/>
</dbReference>
<dbReference type="GO" id="GO:0045202">
    <property type="term" value="C:synapse"/>
    <property type="evidence" value="ECO:0000314"/>
    <property type="project" value="MGI"/>
</dbReference>
<dbReference type="GO" id="GO:0004864">
    <property type="term" value="F:protein phosphatase inhibitor activity"/>
    <property type="evidence" value="ECO:0007669"/>
    <property type="project" value="UniProtKB-KW"/>
</dbReference>
<dbReference type="GO" id="GO:0007268">
    <property type="term" value="P:chemical synaptic transmission"/>
    <property type="evidence" value="ECO:0000315"/>
    <property type="project" value="MGI"/>
</dbReference>
<dbReference type="GO" id="GO:0045184">
    <property type="term" value="P:establishment of protein localization"/>
    <property type="evidence" value="ECO:0000315"/>
    <property type="project" value="MGI"/>
</dbReference>
<dbReference type="GO" id="GO:0010467">
    <property type="term" value="P:gene expression"/>
    <property type="evidence" value="ECO:0000315"/>
    <property type="project" value="MGI"/>
</dbReference>
<dbReference type="GO" id="GO:0099560">
    <property type="term" value="P:synaptic membrane adhesion"/>
    <property type="evidence" value="ECO:0000314"/>
    <property type="project" value="SynGO"/>
</dbReference>
<dbReference type="FunFam" id="3.80.10.10:FF:000047">
    <property type="entry name" value="protein phosphatase 1 regulatory subunit 29"/>
    <property type="match status" value="1"/>
</dbReference>
<dbReference type="Gene3D" id="3.80.10.10">
    <property type="entry name" value="Ribonuclease Inhibitor"/>
    <property type="match status" value="1"/>
</dbReference>
<dbReference type="InterPro" id="IPR055106">
    <property type="entry name" value="ELFN_Fn3"/>
</dbReference>
<dbReference type="InterPro" id="IPR001611">
    <property type="entry name" value="Leu-rich_rpt"/>
</dbReference>
<dbReference type="InterPro" id="IPR003591">
    <property type="entry name" value="Leu-rich_rpt_typical-subtyp"/>
</dbReference>
<dbReference type="InterPro" id="IPR032675">
    <property type="entry name" value="LRR_dom_sf"/>
</dbReference>
<dbReference type="InterPro" id="IPR050541">
    <property type="entry name" value="LRR_TM_domain-containing"/>
</dbReference>
<dbReference type="PANTHER" id="PTHR24369">
    <property type="entry name" value="ANTIGEN BSP, PUTATIVE-RELATED"/>
    <property type="match status" value="1"/>
</dbReference>
<dbReference type="PANTHER" id="PTHR24369:SF204">
    <property type="entry name" value="PROTEIN PHOSPHATASE 1 REGULATORY SUBUNIT 29-RELATED"/>
    <property type="match status" value="1"/>
</dbReference>
<dbReference type="Pfam" id="PF22986">
    <property type="entry name" value="Fn3_ELFN"/>
    <property type="match status" value="1"/>
</dbReference>
<dbReference type="Pfam" id="PF13855">
    <property type="entry name" value="LRR_8"/>
    <property type="match status" value="1"/>
</dbReference>
<dbReference type="SMART" id="SM00369">
    <property type="entry name" value="LRR_TYP"/>
    <property type="match status" value="4"/>
</dbReference>
<dbReference type="SUPFAM" id="SSF52058">
    <property type="entry name" value="L domain-like"/>
    <property type="match status" value="1"/>
</dbReference>
<dbReference type="PROSITE" id="PS51450">
    <property type="entry name" value="LRR"/>
    <property type="match status" value="4"/>
</dbReference>
<evidence type="ECO:0000250" key="1"/>
<evidence type="ECO:0000255" key="2"/>
<evidence type="ECO:0000256" key="3">
    <source>
        <dbReference type="SAM" id="MobiDB-lite"/>
    </source>
</evidence>
<evidence type="ECO:0000305" key="4"/>
<evidence type="ECO:0007744" key="5">
    <source>
    </source>
</evidence>
<feature type="signal peptide" evidence="2">
    <location>
        <begin position="1"/>
        <end position="22"/>
    </location>
</feature>
<feature type="chain" id="PRO_0000256139" description="Protein phosphatase 1 regulatory subunit 29">
    <location>
        <begin position="23"/>
        <end position="823"/>
    </location>
</feature>
<feature type="topological domain" description="Extracellular" evidence="2">
    <location>
        <begin position="23"/>
        <end position="397"/>
    </location>
</feature>
<feature type="transmembrane region" description="Helical" evidence="2">
    <location>
        <begin position="398"/>
        <end position="418"/>
    </location>
</feature>
<feature type="topological domain" description="Cytoplasmic" evidence="2">
    <location>
        <begin position="419"/>
        <end position="823"/>
    </location>
</feature>
<feature type="repeat" description="LRR 1">
    <location>
        <begin position="56"/>
        <end position="77"/>
    </location>
</feature>
<feature type="repeat" description="LRR 2">
    <location>
        <begin position="80"/>
        <end position="101"/>
    </location>
</feature>
<feature type="repeat" description="LRR 3">
    <location>
        <begin position="104"/>
        <end position="125"/>
    </location>
</feature>
<feature type="repeat" description="LRR 4">
    <location>
        <begin position="128"/>
        <end position="149"/>
    </location>
</feature>
<feature type="repeat" description="LRR 5">
    <location>
        <begin position="152"/>
        <end position="173"/>
    </location>
</feature>
<feature type="domain" description="LRRCT">
    <location>
        <begin position="185"/>
        <end position="247"/>
    </location>
</feature>
<feature type="domain" description="Fibronectin type-III">
    <location>
        <begin position="292"/>
        <end position="379"/>
    </location>
</feature>
<feature type="region of interest" description="Disordered" evidence="3">
    <location>
        <begin position="249"/>
        <end position="294"/>
    </location>
</feature>
<feature type="region of interest" description="Disordered" evidence="3">
    <location>
        <begin position="590"/>
        <end position="624"/>
    </location>
</feature>
<feature type="modified residue" description="Phosphoserine" evidence="5">
    <location>
        <position position="622"/>
    </location>
</feature>
<feature type="modified residue" description="Phosphoserine" evidence="5">
    <location>
        <position position="671"/>
    </location>
</feature>
<feature type="modified residue" description="Phosphoserine" evidence="5">
    <location>
        <position position="675"/>
    </location>
</feature>
<feature type="glycosylation site" description="N-linked (GlcNAc...) asparagine" evidence="2">
    <location>
        <position position="54"/>
    </location>
</feature>
<feature type="glycosylation site" description="N-linked (GlcNAc...) asparagine" evidence="2">
    <location>
        <position position="80"/>
    </location>
</feature>
<feature type="glycosylation site" description="N-linked (GlcNAc...) asparagine" evidence="2">
    <location>
        <position position="85"/>
    </location>
</feature>
<feature type="glycosylation site" description="N-linked (GlcNAc...) asparagine" evidence="2">
    <location>
        <position position="117"/>
    </location>
</feature>
<feature type="glycosylation site" description="N-linked (GlcNAc...) asparagine" evidence="2">
    <location>
        <position position="205"/>
    </location>
</feature>
<feature type="glycosylation site" description="N-linked (GlcNAc...) asparagine" evidence="2">
    <location>
        <position position="247"/>
    </location>
</feature>
<feature type="sequence conflict" description="In Ref. 1; BAC27630." evidence="4" ref="1">
    <original>L</original>
    <variation>P</variation>
    <location>
        <position position="749"/>
    </location>
</feature>
<proteinExistence type="evidence at protein level"/>
<sequence length="823" mass="90029">MLRLGLCAAALLCVCQPGAVRADCWLIEGDKGYVWLAICSQNQPPYETIPQHINSTVHDLRLNENKLKAVLYSSLNRFGNLTDLNLTKNEISYIEDGAFLGQTSLQVLQLGYNRLSNLTEGMLRGMSRLQFLFVQHNLIEVVTPTAFSECPSLISIDLSSNRLSRLDGATFASLASLMVCELAGNPFNCECDLFGFLAWLVVFNNVTKNYDRLQCESPREFAGYPLLVPRPYHSLNAITVLQAKCRNGSMPARPVSHPTPYSTDAQREPDENSGFNPDEILSVEPPASSTTDASAGPAIKLHQVTFTSATLVVIIPHPYSKMYVLVQYNNSYFSDVMTLKNKKEIVTLDKLRAHTEYTFCVTSLRNSRRFNHTCLTFTTRDLVPGDLAPSTSTTTHYIMTILGCLFGMVIVLGAVYYCLRKRRMQEEKQKSVNVKKTILEMRYGADVDAGSIVHAAQKLGEPPVLPVARMSSIPSMVGEKLPASKGLEAGLDTPKVATKGNYIEVRTGAAGDSLARPEEELPEIENGQGSAAEISTIAKEVDKVNQIINNCIDALKLDSASFLGGGGGGGGGGDSDLAFECQSLPAAPAASSAATPGALERPSFLSPPYKESSHHPLQRQLSADAAVSRKTCSVSSSGSIKSAKVFSLDVPDHPTPTGLAKSDSKYIEKGSPLNSPLDRLPLVPTGSSGSSGGGGGIHHLEVKPAYHCSEHRHSFPALYYEEGADSLSQRVSFLKPLTRSKRDSTYSQLSPRHYYSGYSSSPEYSSESTHKIWERFRPYKKHHREEVYMAAGHALRKKVQFAKDEDLHDILDYWKGVSAQQKL</sequence>
<name>PPR29_MOUSE</name>
<organism>
    <name type="scientific">Mus musculus</name>
    <name type="common">Mouse</name>
    <dbReference type="NCBI Taxonomy" id="10090"/>
    <lineage>
        <taxon>Eukaryota</taxon>
        <taxon>Metazoa</taxon>
        <taxon>Chordata</taxon>
        <taxon>Craniata</taxon>
        <taxon>Vertebrata</taxon>
        <taxon>Euteleostomi</taxon>
        <taxon>Mammalia</taxon>
        <taxon>Eutheria</taxon>
        <taxon>Euarchontoglires</taxon>
        <taxon>Glires</taxon>
        <taxon>Rodentia</taxon>
        <taxon>Myomorpha</taxon>
        <taxon>Muroidea</taxon>
        <taxon>Muridae</taxon>
        <taxon>Murinae</taxon>
        <taxon>Mus</taxon>
        <taxon>Mus</taxon>
    </lineage>
</organism>
<protein>
    <recommendedName>
        <fullName>Protein phosphatase 1 regulatory subunit 29</fullName>
    </recommendedName>
    <alternativeName>
        <fullName>Extracellular leucine-rich repeat and fibronectin type III domain-containing protein 2</fullName>
    </alternativeName>
    <alternativeName>
        <fullName>Leucine-rich repeat and fibronectin type-III domain-containing protein 6</fullName>
    </alternativeName>
    <alternativeName>
        <fullName>Leucine-rich repeat-containing protein 62</fullName>
    </alternativeName>
</protein>
<keyword id="KW-0325">Glycoprotein</keyword>
<keyword id="KW-0433">Leucine-rich repeat</keyword>
<keyword id="KW-0472">Membrane</keyword>
<keyword id="KW-0597">Phosphoprotein</keyword>
<keyword id="KW-0650">Protein phosphatase inhibitor</keyword>
<keyword id="KW-1185">Reference proteome</keyword>
<keyword id="KW-0677">Repeat</keyword>
<keyword id="KW-0732">Signal</keyword>
<keyword id="KW-0812">Transmembrane</keyword>
<keyword id="KW-1133">Transmembrane helix</keyword>
<accession>Q68FM6</accession>
<accession>Q69Z72</accession>
<accession>Q8CCW8</accession>
<reference key="1">
    <citation type="journal article" date="2005" name="Science">
        <title>The transcriptional landscape of the mammalian genome.</title>
        <authorList>
            <person name="Carninci P."/>
            <person name="Kasukawa T."/>
            <person name="Katayama S."/>
            <person name="Gough J."/>
            <person name="Frith M.C."/>
            <person name="Maeda N."/>
            <person name="Oyama R."/>
            <person name="Ravasi T."/>
            <person name="Lenhard B."/>
            <person name="Wells C."/>
            <person name="Kodzius R."/>
            <person name="Shimokawa K."/>
            <person name="Bajic V.B."/>
            <person name="Brenner S.E."/>
            <person name="Batalov S."/>
            <person name="Forrest A.R."/>
            <person name="Zavolan M."/>
            <person name="Davis M.J."/>
            <person name="Wilming L.G."/>
            <person name="Aidinis V."/>
            <person name="Allen J.E."/>
            <person name="Ambesi-Impiombato A."/>
            <person name="Apweiler R."/>
            <person name="Aturaliya R.N."/>
            <person name="Bailey T.L."/>
            <person name="Bansal M."/>
            <person name="Baxter L."/>
            <person name="Beisel K.W."/>
            <person name="Bersano T."/>
            <person name="Bono H."/>
            <person name="Chalk A.M."/>
            <person name="Chiu K.P."/>
            <person name="Choudhary V."/>
            <person name="Christoffels A."/>
            <person name="Clutterbuck D.R."/>
            <person name="Crowe M.L."/>
            <person name="Dalla E."/>
            <person name="Dalrymple B.P."/>
            <person name="de Bono B."/>
            <person name="Della Gatta G."/>
            <person name="di Bernardo D."/>
            <person name="Down T."/>
            <person name="Engstrom P."/>
            <person name="Fagiolini M."/>
            <person name="Faulkner G."/>
            <person name="Fletcher C.F."/>
            <person name="Fukushima T."/>
            <person name="Furuno M."/>
            <person name="Futaki S."/>
            <person name="Gariboldi M."/>
            <person name="Georgii-Hemming P."/>
            <person name="Gingeras T.R."/>
            <person name="Gojobori T."/>
            <person name="Green R.E."/>
            <person name="Gustincich S."/>
            <person name="Harbers M."/>
            <person name="Hayashi Y."/>
            <person name="Hensch T.K."/>
            <person name="Hirokawa N."/>
            <person name="Hill D."/>
            <person name="Huminiecki L."/>
            <person name="Iacono M."/>
            <person name="Ikeo K."/>
            <person name="Iwama A."/>
            <person name="Ishikawa T."/>
            <person name="Jakt M."/>
            <person name="Kanapin A."/>
            <person name="Katoh M."/>
            <person name="Kawasawa Y."/>
            <person name="Kelso J."/>
            <person name="Kitamura H."/>
            <person name="Kitano H."/>
            <person name="Kollias G."/>
            <person name="Krishnan S.P."/>
            <person name="Kruger A."/>
            <person name="Kummerfeld S.K."/>
            <person name="Kurochkin I.V."/>
            <person name="Lareau L.F."/>
            <person name="Lazarevic D."/>
            <person name="Lipovich L."/>
            <person name="Liu J."/>
            <person name="Liuni S."/>
            <person name="McWilliam S."/>
            <person name="Madan Babu M."/>
            <person name="Madera M."/>
            <person name="Marchionni L."/>
            <person name="Matsuda H."/>
            <person name="Matsuzawa S."/>
            <person name="Miki H."/>
            <person name="Mignone F."/>
            <person name="Miyake S."/>
            <person name="Morris K."/>
            <person name="Mottagui-Tabar S."/>
            <person name="Mulder N."/>
            <person name="Nakano N."/>
            <person name="Nakauchi H."/>
            <person name="Ng P."/>
            <person name="Nilsson R."/>
            <person name="Nishiguchi S."/>
            <person name="Nishikawa S."/>
            <person name="Nori F."/>
            <person name="Ohara O."/>
            <person name="Okazaki Y."/>
            <person name="Orlando V."/>
            <person name="Pang K.C."/>
            <person name="Pavan W.J."/>
            <person name="Pavesi G."/>
            <person name="Pesole G."/>
            <person name="Petrovsky N."/>
            <person name="Piazza S."/>
            <person name="Reed J."/>
            <person name="Reid J.F."/>
            <person name="Ring B.Z."/>
            <person name="Ringwald M."/>
            <person name="Rost B."/>
            <person name="Ruan Y."/>
            <person name="Salzberg S.L."/>
            <person name="Sandelin A."/>
            <person name="Schneider C."/>
            <person name="Schoenbach C."/>
            <person name="Sekiguchi K."/>
            <person name="Semple C.A."/>
            <person name="Seno S."/>
            <person name="Sessa L."/>
            <person name="Sheng Y."/>
            <person name="Shibata Y."/>
            <person name="Shimada H."/>
            <person name="Shimada K."/>
            <person name="Silva D."/>
            <person name="Sinclair B."/>
            <person name="Sperling S."/>
            <person name="Stupka E."/>
            <person name="Sugiura K."/>
            <person name="Sultana R."/>
            <person name="Takenaka Y."/>
            <person name="Taki K."/>
            <person name="Tammoja K."/>
            <person name="Tan S.L."/>
            <person name="Tang S."/>
            <person name="Taylor M.S."/>
            <person name="Tegner J."/>
            <person name="Teichmann S.A."/>
            <person name="Ueda H.R."/>
            <person name="van Nimwegen E."/>
            <person name="Verardo R."/>
            <person name="Wei C.L."/>
            <person name="Yagi K."/>
            <person name="Yamanishi H."/>
            <person name="Zabarovsky E."/>
            <person name="Zhu S."/>
            <person name="Zimmer A."/>
            <person name="Hide W."/>
            <person name="Bult C."/>
            <person name="Grimmond S.M."/>
            <person name="Teasdale R.D."/>
            <person name="Liu E.T."/>
            <person name="Brusic V."/>
            <person name="Quackenbush J."/>
            <person name="Wahlestedt C."/>
            <person name="Mattick J.S."/>
            <person name="Hume D.A."/>
            <person name="Kai C."/>
            <person name="Sasaki D."/>
            <person name="Tomaru Y."/>
            <person name="Fukuda S."/>
            <person name="Kanamori-Katayama M."/>
            <person name="Suzuki M."/>
            <person name="Aoki J."/>
            <person name="Arakawa T."/>
            <person name="Iida J."/>
            <person name="Imamura K."/>
            <person name="Itoh M."/>
            <person name="Kato T."/>
            <person name="Kawaji H."/>
            <person name="Kawagashira N."/>
            <person name="Kawashima T."/>
            <person name="Kojima M."/>
            <person name="Kondo S."/>
            <person name="Konno H."/>
            <person name="Nakano K."/>
            <person name="Ninomiya N."/>
            <person name="Nishio T."/>
            <person name="Okada M."/>
            <person name="Plessy C."/>
            <person name="Shibata K."/>
            <person name="Shiraki T."/>
            <person name="Suzuki S."/>
            <person name="Tagami M."/>
            <person name="Waki K."/>
            <person name="Watahiki A."/>
            <person name="Okamura-Oho Y."/>
            <person name="Suzuki H."/>
            <person name="Kawai J."/>
            <person name="Hayashizaki Y."/>
        </authorList>
    </citation>
    <scope>NUCLEOTIDE SEQUENCE [LARGE SCALE MRNA]</scope>
    <source>
        <strain>C57BL/6J</strain>
        <tissue>Medulla oblongata</tissue>
    </source>
</reference>
<reference key="2">
    <citation type="journal article" date="2004" name="Genome Res.">
        <title>The status, quality, and expansion of the NIH full-length cDNA project: the Mammalian Gene Collection (MGC).</title>
        <authorList>
            <consortium name="The MGC Project Team"/>
        </authorList>
    </citation>
    <scope>NUCLEOTIDE SEQUENCE [LARGE SCALE MRNA]</scope>
    <source>
        <strain>C57BL/6J</strain>
        <tissue>Brain</tissue>
    </source>
</reference>
<reference key="3">
    <citation type="journal article" date="2004" name="DNA Res.">
        <title>Prediction of the coding sequences of mouse homologues of KIAA gene: IV. The complete nucleotide sequences of 500 mouse KIAA-homologous cDNAs identified by screening of terminal sequences of cDNA clones randomly sampled from size-fractionated libraries.</title>
        <authorList>
            <person name="Okazaki N."/>
            <person name="Kikuno R."/>
            <person name="Ohara R."/>
            <person name="Inamoto S."/>
            <person name="Koseki H."/>
            <person name="Hiraoka S."/>
            <person name="Saga Y."/>
            <person name="Seino S."/>
            <person name="Nishimura M."/>
            <person name="Kaisho T."/>
            <person name="Hoshino K."/>
            <person name="Kitamura H."/>
            <person name="Nagase T."/>
            <person name="Ohara O."/>
            <person name="Koga H."/>
        </authorList>
    </citation>
    <scope>NUCLEOTIDE SEQUENCE [LARGE SCALE MRNA] OF 339-823</scope>
    <source>
        <tissue>Fetal brain</tissue>
    </source>
</reference>
<reference key="4">
    <citation type="journal article" date="2010" name="Cell">
        <title>A tissue-specific atlas of mouse protein phosphorylation and expression.</title>
        <authorList>
            <person name="Huttlin E.L."/>
            <person name="Jedrychowski M.P."/>
            <person name="Elias J.E."/>
            <person name="Goswami T."/>
            <person name="Rad R."/>
            <person name="Beausoleil S.A."/>
            <person name="Villen J."/>
            <person name="Haas W."/>
            <person name="Sowa M.E."/>
            <person name="Gygi S.P."/>
        </authorList>
    </citation>
    <scope>PHOSPHORYLATION [LARGE SCALE ANALYSIS] AT SER-622; SER-671 AND SER-675</scope>
    <scope>IDENTIFICATION BY MASS SPECTROMETRY [LARGE SCALE ANALYSIS]</scope>
    <source>
        <tissue>Brain</tissue>
    </source>
</reference>